<gene>
    <name type="primary">GPAT</name>
</gene>
<evidence type="ECO:0000250" key="1"/>
<evidence type="ECO:0000255" key="2"/>
<evidence type="ECO:0000305" key="3"/>
<feature type="transit peptide" description="Chloroplast" evidence="2">
    <location>
        <begin position="1"/>
        <end position="88"/>
    </location>
</feature>
<feature type="chain" id="PRO_0000024698" description="Glycerol-3-phosphate acyltransferase, chloroplastic">
    <location>
        <begin position="89"/>
        <end position="457"/>
    </location>
</feature>
<feature type="short sequence motif" description="HXXXXD motif">
    <location>
        <begin position="227"/>
        <end position="232"/>
    </location>
</feature>
<proteinExistence type="evidence at protein level"/>
<protein>
    <recommendedName>
        <fullName>Glycerol-3-phosphate acyltransferase, chloroplastic</fullName>
        <shortName>GPAT</shortName>
        <ecNumber>2.3.1.15</ecNumber>
    </recommendedName>
</protein>
<reference key="1">
    <citation type="journal article" date="1991" name="Plant Mol. Biol.">
        <title>Purification and cDNA sequencing of an oleate-selective acyl-ACP:sn-glycerol-3-phosphate acyltransferase from pea chloroplasts.</title>
        <authorList>
            <person name="Weber S."/>
            <person name="Wolter F.-P."/>
            <person name="Buck F."/>
            <person name="Frentzen M."/>
            <person name="Heinz E."/>
        </authorList>
    </citation>
    <scope>NUCLEOTIDE SEQUENCE [MRNA]</scope>
    <scope>PROTEIN SEQUENCE OF 112-134; 310-323 AND 326-345</scope>
    <source>
        <strain>cv. Little Marvel</strain>
        <tissue>Seedling</tissue>
    </source>
</reference>
<reference key="2">
    <citation type="journal article" date="1983" name="Eur. J. Biochem.">
        <title>Specificities and selectivities of glycerol-3-phosphate acyltransferase and monoacylglycerol-3-phosphate acyltransferase from pea and spinach chloroplasts.</title>
        <authorList>
            <person name="Frentzen M."/>
            <person name="Heinz E."/>
            <person name="McKeon T.A."/>
            <person name="Stumpf P.K."/>
        </authorList>
    </citation>
    <scope>CHARACTERIZATION</scope>
</reference>
<organism>
    <name type="scientific">Pisum sativum</name>
    <name type="common">Garden pea</name>
    <name type="synonym">Lathyrus oleraceus</name>
    <dbReference type="NCBI Taxonomy" id="3888"/>
    <lineage>
        <taxon>Eukaryota</taxon>
        <taxon>Viridiplantae</taxon>
        <taxon>Streptophyta</taxon>
        <taxon>Embryophyta</taxon>
        <taxon>Tracheophyta</taxon>
        <taxon>Spermatophyta</taxon>
        <taxon>Magnoliopsida</taxon>
        <taxon>eudicotyledons</taxon>
        <taxon>Gunneridae</taxon>
        <taxon>Pentapetalae</taxon>
        <taxon>rosids</taxon>
        <taxon>fabids</taxon>
        <taxon>Fabales</taxon>
        <taxon>Fabaceae</taxon>
        <taxon>Papilionoideae</taxon>
        <taxon>50 kb inversion clade</taxon>
        <taxon>NPAAA clade</taxon>
        <taxon>Hologalegina</taxon>
        <taxon>IRL clade</taxon>
        <taxon>Fabeae</taxon>
        <taxon>Pisum</taxon>
    </lineage>
</organism>
<dbReference type="EC" id="2.3.1.15"/>
<dbReference type="EMBL" id="X59041">
    <property type="protein sequence ID" value="CAA41769.1"/>
    <property type="molecule type" value="mRNA"/>
</dbReference>
<dbReference type="PIR" id="S18239">
    <property type="entry name" value="S18239"/>
</dbReference>
<dbReference type="SMR" id="P30706"/>
<dbReference type="KEGG" id="ag:CAA41769"/>
<dbReference type="UniPathway" id="UPA00557">
    <property type="reaction ID" value="UER00612"/>
</dbReference>
<dbReference type="GO" id="GO:0009570">
    <property type="term" value="C:chloroplast stroma"/>
    <property type="evidence" value="ECO:0007669"/>
    <property type="project" value="UniProtKB-SubCell"/>
</dbReference>
<dbReference type="GO" id="GO:0004366">
    <property type="term" value="F:glycerol-3-phosphate O-acyltransferase activity"/>
    <property type="evidence" value="ECO:0007669"/>
    <property type="project" value="UniProtKB-EC"/>
</dbReference>
<dbReference type="GO" id="GO:0016024">
    <property type="term" value="P:CDP-diacylglycerol biosynthetic process"/>
    <property type="evidence" value="ECO:0007669"/>
    <property type="project" value="UniProtKB-UniPathway"/>
</dbReference>
<dbReference type="GO" id="GO:0006655">
    <property type="term" value="P:phosphatidylglycerol biosynthetic process"/>
    <property type="evidence" value="ECO:0007669"/>
    <property type="project" value="TreeGrafter"/>
</dbReference>
<dbReference type="Gene3D" id="3.40.1130.10">
    <property type="entry name" value="Glycerol-3-phosphate (1)-acyltransferase"/>
    <property type="match status" value="1"/>
</dbReference>
<dbReference type="Gene3D" id="1.10.1200.50">
    <property type="entry name" value="Glycerol-3-phosphate acyltransferase, alpha helical bundle, N-terminal"/>
    <property type="match status" value="1"/>
</dbReference>
<dbReference type="InterPro" id="IPR016222">
    <property type="entry name" value="G3P_O-acylTrfase_chlp"/>
</dbReference>
<dbReference type="InterPro" id="IPR023083">
    <property type="entry name" value="G3P_O-acylTrfase_N"/>
</dbReference>
<dbReference type="InterPro" id="IPR038114">
    <property type="entry name" value="GPAT_N_sf"/>
</dbReference>
<dbReference type="InterPro" id="IPR002123">
    <property type="entry name" value="Plipid/glycerol_acylTrfase"/>
</dbReference>
<dbReference type="PANTHER" id="PTHR35695">
    <property type="entry name" value="GLYCEROL-3-PHOSPHATE ACYLTRANSFERASE, CHLOROPLASTIC"/>
    <property type="match status" value="1"/>
</dbReference>
<dbReference type="PANTHER" id="PTHR35695:SF1">
    <property type="entry name" value="GLYCEROL-3-PHOSPHATE ACYLTRANSFERASE, CHLOROPLASTIC"/>
    <property type="match status" value="1"/>
</dbReference>
<dbReference type="Pfam" id="PF01553">
    <property type="entry name" value="Acyltransferase"/>
    <property type="match status" value="1"/>
</dbReference>
<dbReference type="Pfam" id="PF14829">
    <property type="entry name" value="GPAT_N"/>
    <property type="match status" value="1"/>
</dbReference>
<dbReference type="PIRSF" id="PIRSF000431">
    <property type="entry name" value="Glycerol-3-P_O-acyltransfrase"/>
    <property type="match status" value="1"/>
</dbReference>
<dbReference type="SMART" id="SM00563">
    <property type="entry name" value="PlsC"/>
    <property type="match status" value="1"/>
</dbReference>
<dbReference type="SUPFAM" id="SSF69593">
    <property type="entry name" value="Glycerol-3-phosphate (1)-acyltransferase"/>
    <property type="match status" value="1"/>
</dbReference>
<keyword id="KW-0012">Acyltransferase</keyword>
<keyword id="KW-0150">Chloroplast</keyword>
<keyword id="KW-0903">Direct protein sequencing</keyword>
<keyword id="KW-0444">Lipid biosynthesis</keyword>
<keyword id="KW-0443">Lipid metabolism</keyword>
<keyword id="KW-0594">Phospholipid biosynthesis</keyword>
<keyword id="KW-1208">Phospholipid metabolism</keyword>
<keyword id="KW-0934">Plastid</keyword>
<keyword id="KW-0808">Transferase</keyword>
<keyword id="KW-0809">Transit peptide</keyword>
<comment type="function">
    <text>Esterifies acyl-group from acyl-ACP to the sn-1 position of glycerol-3-phosphate. The enzyme from chilling-resistant plants discriminates against non-fluid palmitic acid and selects oleic acid whereas the enzyme from sensitive plants accepts both fatty acids. This is an oleate-selective acyltransferase.</text>
</comment>
<comment type="catalytic activity">
    <reaction>
        <text>sn-glycerol 3-phosphate + an acyl-CoA = a 1-acyl-sn-glycero-3-phosphate + CoA</text>
        <dbReference type="Rhea" id="RHEA:15325"/>
        <dbReference type="ChEBI" id="CHEBI:57287"/>
        <dbReference type="ChEBI" id="CHEBI:57597"/>
        <dbReference type="ChEBI" id="CHEBI:57970"/>
        <dbReference type="ChEBI" id="CHEBI:58342"/>
        <dbReference type="EC" id="2.3.1.15"/>
    </reaction>
</comment>
<comment type="pathway">
    <text>Phospholipid metabolism; CDP-diacylglycerol biosynthesis; CDP-diacylglycerol from sn-glycerol 3-phosphate: step 1/3.</text>
</comment>
<comment type="subcellular location">
    <subcellularLocation>
        <location>Plastid</location>
        <location>Chloroplast stroma</location>
    </subcellularLocation>
</comment>
<comment type="domain">
    <text evidence="1">The HXXXXD motif is essential for acyltransferase activity and may constitute the binding site for the phosphate moiety of the glycerol-3-phosphate.</text>
</comment>
<comment type="PTM">
    <text>The N-terminus is blocked.</text>
</comment>
<comment type="similarity">
    <text evidence="3">Belongs to the GPAT/DAPAT family.</text>
</comment>
<sequence>MTDSFAHCASHINYRHKMKTMFIFSTPCCSPSTAFFSPFRASNSKPLRSTLSLRSSISSSSITSTSHCSLAFNIVKHKEKNVVSANMTSSVSSRTFLNAQNEQDVLSGIKKEVEAGTLPASIAAGMEEVYLNYKSAVIKSGDPKANEIVLSNMTALLDRIFLDVKEPFVFEAHHKAKREPFDYYMFGQNYIRPLVDFETSYVGNMPLFIQMEEQLKQGHNIILMSNHQSEADPAIIALLLEMRLPHIAENLIYVAGDRVITVPLCKPFSIGRNLICVYSKKHMLDNPELVDMKRKANTRSRKEMAMLLRSGSQIIWIAPSGGRDRPVANSGEWAPAPFDSSSVDNMRRLVDHSGPPGHIYPLAILCHDIMPPPLKVEKEIGEKRIISYHGTGISTAPEISFSNTTAACENPEKAKDAYTKALYDSVTEQYDVLKSAIHGKKGLQASTPVVSLSQPWK</sequence>
<name>PLSB_PEA</name>
<accession>P30706</accession>